<protein>
    <recommendedName>
        <fullName evidence="1">Imidazole glycerol phosphate synthase subunit HisF</fullName>
        <ecNumber evidence="1">4.3.2.10</ecNumber>
    </recommendedName>
    <alternativeName>
        <fullName evidence="1">IGP synthase cyclase subunit</fullName>
    </alternativeName>
    <alternativeName>
        <fullName evidence="1">IGP synthase subunit HisF</fullName>
    </alternativeName>
    <alternativeName>
        <fullName evidence="1">ImGP synthase subunit HisF</fullName>
        <shortName evidence="1">IGPS subunit HisF</shortName>
    </alternativeName>
</protein>
<dbReference type="EC" id="4.3.2.10" evidence="1"/>
<dbReference type="EMBL" id="CU928164">
    <property type="protein sequence ID" value="CAR17130.1"/>
    <property type="molecule type" value="Genomic_DNA"/>
</dbReference>
<dbReference type="RefSeq" id="WP_000880183.1">
    <property type="nucleotide sequence ID" value="NC_011750.1"/>
</dbReference>
<dbReference type="RefSeq" id="YP_002407015.1">
    <property type="nucleotide sequence ID" value="NC_011750.1"/>
</dbReference>
<dbReference type="SMR" id="B7NQG5"/>
<dbReference type="STRING" id="585057.ECIAI39_0993"/>
<dbReference type="KEGG" id="ect:ECIAI39_0993"/>
<dbReference type="PATRIC" id="fig|585057.6.peg.1042"/>
<dbReference type="HOGENOM" id="CLU_048577_4_0_6"/>
<dbReference type="UniPathway" id="UPA00031">
    <property type="reaction ID" value="UER00010"/>
</dbReference>
<dbReference type="Proteomes" id="UP000000749">
    <property type="component" value="Chromosome"/>
</dbReference>
<dbReference type="GO" id="GO:0005737">
    <property type="term" value="C:cytoplasm"/>
    <property type="evidence" value="ECO:0007669"/>
    <property type="project" value="UniProtKB-SubCell"/>
</dbReference>
<dbReference type="GO" id="GO:0000107">
    <property type="term" value="F:imidazoleglycerol-phosphate synthase activity"/>
    <property type="evidence" value="ECO:0007669"/>
    <property type="project" value="UniProtKB-UniRule"/>
</dbReference>
<dbReference type="GO" id="GO:0016829">
    <property type="term" value="F:lyase activity"/>
    <property type="evidence" value="ECO:0007669"/>
    <property type="project" value="UniProtKB-KW"/>
</dbReference>
<dbReference type="GO" id="GO:0000105">
    <property type="term" value="P:L-histidine biosynthetic process"/>
    <property type="evidence" value="ECO:0007669"/>
    <property type="project" value="UniProtKB-UniRule"/>
</dbReference>
<dbReference type="CDD" id="cd04731">
    <property type="entry name" value="HisF"/>
    <property type="match status" value="1"/>
</dbReference>
<dbReference type="FunFam" id="3.20.20.70:FF:000006">
    <property type="entry name" value="Imidazole glycerol phosphate synthase subunit HisF"/>
    <property type="match status" value="1"/>
</dbReference>
<dbReference type="Gene3D" id="3.20.20.70">
    <property type="entry name" value="Aldolase class I"/>
    <property type="match status" value="1"/>
</dbReference>
<dbReference type="HAMAP" id="MF_01013">
    <property type="entry name" value="HisF"/>
    <property type="match status" value="1"/>
</dbReference>
<dbReference type="InterPro" id="IPR013785">
    <property type="entry name" value="Aldolase_TIM"/>
</dbReference>
<dbReference type="InterPro" id="IPR006062">
    <property type="entry name" value="His_biosynth"/>
</dbReference>
<dbReference type="InterPro" id="IPR004651">
    <property type="entry name" value="HisF"/>
</dbReference>
<dbReference type="InterPro" id="IPR050064">
    <property type="entry name" value="IGPS_HisA/HisF"/>
</dbReference>
<dbReference type="InterPro" id="IPR011060">
    <property type="entry name" value="RibuloseP-bd_barrel"/>
</dbReference>
<dbReference type="NCBIfam" id="TIGR00735">
    <property type="entry name" value="hisF"/>
    <property type="match status" value="1"/>
</dbReference>
<dbReference type="PANTHER" id="PTHR21235:SF2">
    <property type="entry name" value="IMIDAZOLE GLYCEROL PHOSPHATE SYNTHASE HISHF"/>
    <property type="match status" value="1"/>
</dbReference>
<dbReference type="PANTHER" id="PTHR21235">
    <property type="entry name" value="IMIDAZOLE GLYCEROL PHOSPHATE SYNTHASE SUBUNIT HISF/H IGP SYNTHASE SUBUNIT HISF/H"/>
    <property type="match status" value="1"/>
</dbReference>
<dbReference type="Pfam" id="PF00977">
    <property type="entry name" value="His_biosynth"/>
    <property type="match status" value="1"/>
</dbReference>
<dbReference type="SUPFAM" id="SSF51366">
    <property type="entry name" value="Ribulose-phoshate binding barrel"/>
    <property type="match status" value="1"/>
</dbReference>
<gene>
    <name evidence="1" type="primary">hisF</name>
    <name type="ordered locus">ECIAI39_0993</name>
</gene>
<sequence length="258" mass="28515">MLAKRIIPCLDVRDGQVVKGVQFRNHEIIGDIVPLAKRYAEEGADELVFYDITASSDGRVVDKSWVSRVAEVIDIPFCVAGGIKSLEDAAKILSFGADKISINSPALADPTLITRLADRFGVQCIVVGIDTWYDAETGKYHVNQYTGDESRTRVTQWETLDWVQEVQKRGAGEIVLNMMNQDGVRNGYDLEQLKKVREVCHVPLIASGGAGTMEHFLEAFRDADVDGALAASVFHKQIINISELKTYLATQGVEIRIC</sequence>
<evidence type="ECO:0000255" key="1">
    <source>
        <dbReference type="HAMAP-Rule" id="MF_01013"/>
    </source>
</evidence>
<accession>B7NQG5</accession>
<keyword id="KW-0028">Amino-acid biosynthesis</keyword>
<keyword id="KW-0963">Cytoplasm</keyword>
<keyword id="KW-0368">Histidine biosynthesis</keyword>
<keyword id="KW-0456">Lyase</keyword>
<organism>
    <name type="scientific">Escherichia coli O7:K1 (strain IAI39 / ExPEC)</name>
    <dbReference type="NCBI Taxonomy" id="585057"/>
    <lineage>
        <taxon>Bacteria</taxon>
        <taxon>Pseudomonadati</taxon>
        <taxon>Pseudomonadota</taxon>
        <taxon>Gammaproteobacteria</taxon>
        <taxon>Enterobacterales</taxon>
        <taxon>Enterobacteriaceae</taxon>
        <taxon>Escherichia</taxon>
    </lineage>
</organism>
<comment type="function">
    <text evidence="1">IGPS catalyzes the conversion of PRFAR and glutamine to IGP, AICAR and glutamate. The HisF subunit catalyzes the cyclization activity that produces IGP and AICAR from PRFAR using the ammonia provided by the HisH subunit.</text>
</comment>
<comment type="catalytic activity">
    <reaction evidence="1">
        <text>5-[(5-phospho-1-deoxy-D-ribulos-1-ylimino)methylamino]-1-(5-phospho-beta-D-ribosyl)imidazole-4-carboxamide + L-glutamine = D-erythro-1-(imidazol-4-yl)glycerol 3-phosphate + 5-amino-1-(5-phospho-beta-D-ribosyl)imidazole-4-carboxamide + L-glutamate + H(+)</text>
        <dbReference type="Rhea" id="RHEA:24793"/>
        <dbReference type="ChEBI" id="CHEBI:15378"/>
        <dbReference type="ChEBI" id="CHEBI:29985"/>
        <dbReference type="ChEBI" id="CHEBI:58278"/>
        <dbReference type="ChEBI" id="CHEBI:58359"/>
        <dbReference type="ChEBI" id="CHEBI:58475"/>
        <dbReference type="ChEBI" id="CHEBI:58525"/>
        <dbReference type="EC" id="4.3.2.10"/>
    </reaction>
</comment>
<comment type="pathway">
    <text evidence="1">Amino-acid biosynthesis; L-histidine biosynthesis; L-histidine from 5-phospho-alpha-D-ribose 1-diphosphate: step 5/9.</text>
</comment>
<comment type="subunit">
    <text evidence="1">Heterodimer of HisH and HisF.</text>
</comment>
<comment type="subcellular location">
    <subcellularLocation>
        <location evidence="1">Cytoplasm</location>
    </subcellularLocation>
</comment>
<comment type="similarity">
    <text evidence="1">Belongs to the HisA/HisF family.</text>
</comment>
<proteinExistence type="inferred from homology"/>
<feature type="chain" id="PRO_1000134995" description="Imidazole glycerol phosphate synthase subunit HisF">
    <location>
        <begin position="1"/>
        <end position="258"/>
    </location>
</feature>
<feature type="active site" evidence="1">
    <location>
        <position position="11"/>
    </location>
</feature>
<feature type="active site" evidence="1">
    <location>
        <position position="130"/>
    </location>
</feature>
<reference key="1">
    <citation type="journal article" date="2009" name="PLoS Genet.">
        <title>Organised genome dynamics in the Escherichia coli species results in highly diverse adaptive paths.</title>
        <authorList>
            <person name="Touchon M."/>
            <person name="Hoede C."/>
            <person name="Tenaillon O."/>
            <person name="Barbe V."/>
            <person name="Baeriswyl S."/>
            <person name="Bidet P."/>
            <person name="Bingen E."/>
            <person name="Bonacorsi S."/>
            <person name="Bouchier C."/>
            <person name="Bouvet O."/>
            <person name="Calteau A."/>
            <person name="Chiapello H."/>
            <person name="Clermont O."/>
            <person name="Cruveiller S."/>
            <person name="Danchin A."/>
            <person name="Diard M."/>
            <person name="Dossat C."/>
            <person name="Karoui M.E."/>
            <person name="Frapy E."/>
            <person name="Garry L."/>
            <person name="Ghigo J.M."/>
            <person name="Gilles A.M."/>
            <person name="Johnson J."/>
            <person name="Le Bouguenec C."/>
            <person name="Lescat M."/>
            <person name="Mangenot S."/>
            <person name="Martinez-Jehanne V."/>
            <person name="Matic I."/>
            <person name="Nassif X."/>
            <person name="Oztas S."/>
            <person name="Petit M.A."/>
            <person name="Pichon C."/>
            <person name="Rouy Z."/>
            <person name="Ruf C.S."/>
            <person name="Schneider D."/>
            <person name="Tourret J."/>
            <person name="Vacherie B."/>
            <person name="Vallenet D."/>
            <person name="Medigue C."/>
            <person name="Rocha E.P.C."/>
            <person name="Denamur E."/>
        </authorList>
    </citation>
    <scope>NUCLEOTIDE SEQUENCE [LARGE SCALE GENOMIC DNA]</scope>
    <source>
        <strain>IAI39 / ExPEC</strain>
    </source>
</reference>
<name>HIS6_ECO7I</name>